<accession>Q58DQ3</accession>
<accession>A3KMZ3</accession>
<organism>
    <name type="scientific">Bos taurus</name>
    <name type="common">Bovine</name>
    <dbReference type="NCBI Taxonomy" id="9913"/>
    <lineage>
        <taxon>Eukaryota</taxon>
        <taxon>Metazoa</taxon>
        <taxon>Chordata</taxon>
        <taxon>Craniata</taxon>
        <taxon>Vertebrata</taxon>
        <taxon>Euteleostomi</taxon>
        <taxon>Mammalia</taxon>
        <taxon>Eutheria</taxon>
        <taxon>Laurasiatheria</taxon>
        <taxon>Artiodactyla</taxon>
        <taxon>Ruminantia</taxon>
        <taxon>Pecora</taxon>
        <taxon>Bovidae</taxon>
        <taxon>Bovinae</taxon>
        <taxon>Bos</taxon>
    </lineage>
</organism>
<dbReference type="EMBL" id="BT021543">
    <property type="protein sequence ID" value="AAX46390.1"/>
    <property type="molecule type" value="mRNA"/>
</dbReference>
<dbReference type="EMBL" id="BT021544">
    <property type="protein sequence ID" value="AAX46391.1"/>
    <property type="molecule type" value="mRNA"/>
</dbReference>
<dbReference type="EMBL" id="AY911360">
    <property type="protein sequence ID" value="AAW82124.1"/>
    <property type="molecule type" value="mRNA"/>
</dbReference>
<dbReference type="EMBL" id="BC133430">
    <property type="protein sequence ID" value="AAI33431.1"/>
    <property type="molecule type" value="mRNA"/>
</dbReference>
<dbReference type="RefSeq" id="NP_001026926.1">
    <property type="nucleotide sequence ID" value="NM_001031756.2"/>
</dbReference>
<dbReference type="RefSeq" id="XP_005217842.1">
    <property type="nucleotide sequence ID" value="XM_005217785.4"/>
</dbReference>
<dbReference type="RefSeq" id="XP_005217843.1">
    <property type="nucleotide sequence ID" value="XM_005217786.4"/>
</dbReference>
<dbReference type="RefSeq" id="XP_024832934.1">
    <property type="nucleotide sequence ID" value="XM_024977166.2"/>
</dbReference>
<dbReference type="SMR" id="Q58DQ3"/>
<dbReference type="FunCoup" id="Q58DQ3">
    <property type="interactions" value="3310"/>
</dbReference>
<dbReference type="STRING" id="9913.ENSBTAP00000042411"/>
<dbReference type="PaxDb" id="9913-ENSBTAP00000042411"/>
<dbReference type="PeptideAtlas" id="Q58DQ3"/>
<dbReference type="Ensembl" id="ENSBTAT00000033359.5">
    <property type="protein sequence ID" value="ENSBTAP00000042411.2"/>
    <property type="gene ID" value="ENSBTAG00000031723.4"/>
</dbReference>
<dbReference type="GeneID" id="511051"/>
<dbReference type="KEGG" id="bta:511051"/>
<dbReference type="CTD" id="6128"/>
<dbReference type="VEuPathDB" id="HostDB:ENSBTAG00000031723"/>
<dbReference type="eggNOG" id="KOG1694">
    <property type="taxonomic scope" value="Eukaryota"/>
</dbReference>
<dbReference type="GeneTree" id="ENSGT00390000003682"/>
<dbReference type="HOGENOM" id="CLU_066767_0_1_1"/>
<dbReference type="InParanoid" id="Q58DQ3"/>
<dbReference type="OMA" id="KWYNADD"/>
<dbReference type="OrthoDB" id="9712010at2759"/>
<dbReference type="TreeFam" id="TF300115"/>
<dbReference type="Reactome" id="R-BTA-156827">
    <property type="pathway name" value="L13a-mediated translational silencing of Ceruloplasmin expression"/>
</dbReference>
<dbReference type="Reactome" id="R-BTA-1799339">
    <property type="pathway name" value="SRP-dependent cotranslational protein targeting to membrane"/>
</dbReference>
<dbReference type="Reactome" id="R-BTA-6791226">
    <property type="pathway name" value="Major pathway of rRNA processing in the nucleolus and cytosol"/>
</dbReference>
<dbReference type="Reactome" id="R-BTA-72689">
    <property type="pathway name" value="Formation of a pool of free 40S subunits"/>
</dbReference>
<dbReference type="Reactome" id="R-BTA-72706">
    <property type="pathway name" value="GTP hydrolysis and joining of the 60S ribosomal subunit"/>
</dbReference>
<dbReference type="Reactome" id="R-BTA-975956">
    <property type="pathway name" value="Nonsense Mediated Decay (NMD) independent of the Exon Junction Complex (EJC)"/>
</dbReference>
<dbReference type="Reactome" id="R-BTA-975957">
    <property type="pathway name" value="Nonsense Mediated Decay (NMD) enhanced by the Exon Junction Complex (EJC)"/>
</dbReference>
<dbReference type="CD-CODE" id="D7FE2080">
    <property type="entry name" value="Nucleolus"/>
</dbReference>
<dbReference type="Proteomes" id="UP000009136">
    <property type="component" value="Chromosome 17"/>
</dbReference>
<dbReference type="Bgee" id="ENSBTAG00000031723">
    <property type="expression patterns" value="Expressed in adenohypophysis and 107 other cell types or tissues"/>
</dbReference>
<dbReference type="GO" id="GO:0022625">
    <property type="term" value="C:cytosolic large ribosomal subunit"/>
    <property type="evidence" value="ECO:0000250"/>
    <property type="project" value="UniProtKB"/>
</dbReference>
<dbReference type="GO" id="GO:0031090">
    <property type="term" value="C:organelle membrane"/>
    <property type="evidence" value="ECO:0007669"/>
    <property type="project" value="UniProtKB-ARBA"/>
</dbReference>
<dbReference type="GO" id="GO:0005791">
    <property type="term" value="C:rough endoplasmic reticulum"/>
    <property type="evidence" value="ECO:0007669"/>
    <property type="project" value="UniProtKB-SubCell"/>
</dbReference>
<dbReference type="GO" id="GO:0003723">
    <property type="term" value="F:RNA binding"/>
    <property type="evidence" value="ECO:0000318"/>
    <property type="project" value="GO_Central"/>
</dbReference>
<dbReference type="GO" id="GO:0003735">
    <property type="term" value="F:structural constituent of ribosome"/>
    <property type="evidence" value="ECO:0000318"/>
    <property type="project" value="GO_Central"/>
</dbReference>
<dbReference type="GO" id="GO:0002181">
    <property type="term" value="P:cytoplasmic translation"/>
    <property type="evidence" value="ECO:0000250"/>
    <property type="project" value="UniProtKB"/>
</dbReference>
<dbReference type="CDD" id="cd13156">
    <property type="entry name" value="KOW_RPL6"/>
    <property type="match status" value="1"/>
</dbReference>
<dbReference type="FunFam" id="2.30.30.30:FF:000020">
    <property type="entry name" value="60S ribosomal protein L6"/>
    <property type="match status" value="1"/>
</dbReference>
<dbReference type="Gene3D" id="2.30.30.30">
    <property type="match status" value="1"/>
</dbReference>
<dbReference type="InterPro" id="IPR000915">
    <property type="entry name" value="60S_ribosomal_eL6"/>
</dbReference>
<dbReference type="InterPro" id="IPR014722">
    <property type="entry name" value="Rib_uL2_dom2"/>
</dbReference>
<dbReference type="InterPro" id="IPR049633">
    <property type="entry name" value="Ribosomal_eL6_CS"/>
</dbReference>
<dbReference type="InterPro" id="IPR041997">
    <property type="entry name" value="Ribosomal_eL6_KOW"/>
</dbReference>
<dbReference type="InterPro" id="IPR005568">
    <property type="entry name" value="Ribosomal_uL6_N"/>
</dbReference>
<dbReference type="InterPro" id="IPR008991">
    <property type="entry name" value="Translation_prot_SH3-like_sf"/>
</dbReference>
<dbReference type="PANTHER" id="PTHR10715">
    <property type="entry name" value="60S RIBOSOMAL PROTEIN L6"/>
    <property type="match status" value="1"/>
</dbReference>
<dbReference type="PANTHER" id="PTHR10715:SF0">
    <property type="entry name" value="LARGE RIBOSOMAL SUBUNIT PROTEIN EL6"/>
    <property type="match status" value="1"/>
</dbReference>
<dbReference type="Pfam" id="PF01159">
    <property type="entry name" value="Ribosomal_L6e"/>
    <property type="match status" value="1"/>
</dbReference>
<dbReference type="Pfam" id="PF03868">
    <property type="entry name" value="Ribosomal_L6e_N"/>
    <property type="match status" value="1"/>
</dbReference>
<dbReference type="SUPFAM" id="SSF50104">
    <property type="entry name" value="Translation proteins SH3-like domain"/>
    <property type="match status" value="1"/>
</dbReference>
<dbReference type="PROSITE" id="PS01170">
    <property type="entry name" value="RIBOSOMAL_L6E"/>
    <property type="match status" value="1"/>
</dbReference>
<gene>
    <name type="primary">RPL6</name>
</gene>
<sequence>MAGEKAEKPDTKEKKPEAKKADAGKKAKKVEKVKKVKKGKPHCSRNPVLVRGIGRYSRSAMYSRKALYKRKYSAAKSKVEKKKKVRVLATVTKPVGGDKNGGTRVVKLRKMPRYYPTEDVPRKLLSHGKKPFSKHVRKLRASITPGTILIILTGRHRGKRVVFLKQLGSGLLLVTGPLSLNRVPLRRTHQKFVIATSTKIDISGVKIPEHLTDTYFKKKKLRKPRHQEGEIFDTEREKYEITEQRKVDQKAVDSQILRRIKAVPQLQGYLRSVFALTNGIYPHKVVF</sequence>
<name>RL6_BOVIN</name>
<proteinExistence type="evidence at transcript level"/>
<evidence type="ECO:0000250" key="1">
    <source>
        <dbReference type="UniProtKB" id="P47911"/>
    </source>
</evidence>
<evidence type="ECO:0000250" key="2">
    <source>
        <dbReference type="UniProtKB" id="Q02878"/>
    </source>
</evidence>
<evidence type="ECO:0000250" key="3">
    <source>
        <dbReference type="UniProtKB" id="Q2YGT9"/>
    </source>
</evidence>
<evidence type="ECO:0000256" key="4">
    <source>
        <dbReference type="SAM" id="MobiDB-lite"/>
    </source>
</evidence>
<evidence type="ECO:0000305" key="5"/>
<feature type="chain" id="PRO_0000171007" description="Large ribosomal subunit protein eL6">
    <location>
        <begin position="1"/>
        <end position="287"/>
    </location>
</feature>
<feature type="region of interest" description="Disordered" evidence="4">
    <location>
        <begin position="1"/>
        <end position="44"/>
    </location>
</feature>
<feature type="compositionally biased region" description="Basic and acidic residues" evidence="4">
    <location>
        <begin position="1"/>
        <end position="25"/>
    </location>
</feature>
<feature type="compositionally biased region" description="Basic residues" evidence="4">
    <location>
        <begin position="26"/>
        <end position="43"/>
    </location>
</feature>
<feature type="modified residue" description="N6-succinyllysine" evidence="1">
    <location>
        <position position="93"/>
    </location>
</feature>
<feature type="modified residue" description="Phosphoserine" evidence="2">
    <location>
        <position position="126"/>
    </location>
</feature>
<feature type="modified residue" description="N6-succinyllysine" evidence="1">
    <location>
        <position position="206"/>
    </location>
</feature>
<feature type="modified residue" description="N6-acetyllysine" evidence="2">
    <location>
        <position position="238"/>
    </location>
</feature>
<feature type="cross-link" description="Glycyl lysine isopeptide (Lys-Gly) (interchain with G-Cter in SUMO2)" evidence="2">
    <location>
        <position position="5"/>
    </location>
</feature>
<protein>
    <recommendedName>
        <fullName evidence="5">Large ribosomal subunit protein eL6</fullName>
    </recommendedName>
    <alternativeName>
        <fullName>60S ribosomal protein L6</fullName>
    </alternativeName>
</protein>
<comment type="function">
    <text evidence="2">Component of the large ribosomal subunit. The ribosome is a large ribonucleoprotein complex responsible for the synthesis of proteins in the cell.</text>
</comment>
<comment type="subunit">
    <text evidence="1 2">Component of the large ribosomal subunit (By similarity). May bind IPO9 with low affinity (By similarity).</text>
</comment>
<comment type="subcellular location">
    <subcellularLocation>
        <location evidence="2">Cytoplasm</location>
        <location evidence="2">Cytosol</location>
    </subcellularLocation>
    <subcellularLocation>
        <location evidence="2">Cytoplasm</location>
    </subcellularLocation>
    <subcellularLocation>
        <location evidence="3">Rough endoplasmic reticulum</location>
    </subcellularLocation>
    <text evidence="2 3">Detected on cytosolic polysomes (By similarity). Detected in ribosomes that are associated with the rough endoplasmic reticulum (By similarity).</text>
</comment>
<comment type="similarity">
    <text evidence="5">Belongs to the eukaryotic ribosomal protein eL6 family.</text>
</comment>
<reference key="1">
    <citation type="journal article" date="2005" name="BMC Genomics">
        <title>Characterization of 954 bovine full-CDS cDNA sequences.</title>
        <authorList>
            <person name="Harhay G.P."/>
            <person name="Sonstegard T.S."/>
            <person name="Keele J.W."/>
            <person name="Heaton M.P."/>
            <person name="Clawson M.L."/>
            <person name="Snelling W.M."/>
            <person name="Wiedmann R.T."/>
            <person name="Van Tassell C.P."/>
            <person name="Smith T.P.L."/>
        </authorList>
    </citation>
    <scope>NUCLEOTIDE SEQUENCE [LARGE SCALE MRNA]</scope>
</reference>
<reference key="2">
    <citation type="submission" date="2005-01" db="EMBL/GenBank/DDBJ databases">
        <title>Analysis of sequences obtained from constructed full-length bovine cDNA libraries.</title>
        <authorList>
            <person name="Yu J."/>
            <person name="Meng Y."/>
            <person name="Wang Z."/>
            <person name="Hansen C."/>
            <person name="Li C."/>
            <person name="Moore S.S."/>
        </authorList>
    </citation>
    <scope>NUCLEOTIDE SEQUENCE [LARGE SCALE MRNA]</scope>
    <source>
        <tissue>Lymphoid epithelium</tissue>
    </source>
</reference>
<reference key="3">
    <citation type="submission" date="2007-02" db="EMBL/GenBank/DDBJ databases">
        <authorList>
            <consortium name="NIH - Mammalian Gene Collection (MGC) project"/>
        </authorList>
    </citation>
    <scope>NUCLEOTIDE SEQUENCE [LARGE SCALE MRNA]</scope>
    <source>
        <strain>Hereford</strain>
        <tissue>Fetal pons</tissue>
    </source>
</reference>
<keyword id="KW-0007">Acetylation</keyword>
<keyword id="KW-0963">Cytoplasm</keyword>
<keyword id="KW-0256">Endoplasmic reticulum</keyword>
<keyword id="KW-1017">Isopeptide bond</keyword>
<keyword id="KW-0597">Phosphoprotein</keyword>
<keyword id="KW-1185">Reference proteome</keyword>
<keyword id="KW-0687">Ribonucleoprotein</keyword>
<keyword id="KW-0689">Ribosomal protein</keyword>
<keyword id="KW-0832">Ubl conjugation</keyword>